<proteinExistence type="inferred from homology"/>
<reference key="1">
    <citation type="journal article" date="2002" name="Environ. Microbiol.">
        <title>Complete genome sequence and comparative analysis of the metabolically versatile Pseudomonas putida KT2440.</title>
        <authorList>
            <person name="Nelson K.E."/>
            <person name="Weinel C."/>
            <person name="Paulsen I.T."/>
            <person name="Dodson R.J."/>
            <person name="Hilbert H."/>
            <person name="Martins dos Santos V.A.P."/>
            <person name="Fouts D.E."/>
            <person name="Gill S.R."/>
            <person name="Pop M."/>
            <person name="Holmes M."/>
            <person name="Brinkac L.M."/>
            <person name="Beanan M.J."/>
            <person name="DeBoy R.T."/>
            <person name="Daugherty S.C."/>
            <person name="Kolonay J.F."/>
            <person name="Madupu R."/>
            <person name="Nelson W.C."/>
            <person name="White O."/>
            <person name="Peterson J.D."/>
            <person name="Khouri H.M."/>
            <person name="Hance I."/>
            <person name="Chris Lee P."/>
            <person name="Holtzapple E.K."/>
            <person name="Scanlan D."/>
            <person name="Tran K."/>
            <person name="Moazzez A."/>
            <person name="Utterback T.R."/>
            <person name="Rizzo M."/>
            <person name="Lee K."/>
            <person name="Kosack D."/>
            <person name="Moestl D."/>
            <person name="Wedler H."/>
            <person name="Lauber J."/>
            <person name="Stjepandic D."/>
            <person name="Hoheisel J."/>
            <person name="Straetz M."/>
            <person name="Heim S."/>
            <person name="Kiewitz C."/>
            <person name="Eisen J.A."/>
            <person name="Timmis K.N."/>
            <person name="Duesterhoeft A."/>
            <person name="Tuemmler B."/>
            <person name="Fraser C.M."/>
        </authorList>
    </citation>
    <scope>NUCLEOTIDE SEQUENCE [LARGE SCALE GENOMIC DNA]</scope>
    <source>
        <strain>ATCC 47054 / DSM 6125 / CFBP 8728 / NCIMB 11950 / KT2440</strain>
    </source>
</reference>
<sequence>MPEQLKQRVETCYQQAEAFFKRRFPRPEVSFKLRGQKAGVAHLHENLLRFNLQLYRENQEDFLRQTVAHEVAHLVAHQLFGDRIQAHGEEWQLIMRGVYELPPNRCHNYDVQRRAVTRYIYRCPCPQSDFPFTAQRHKLVHQGRRYLCKRCREVLVYSGETRVE</sequence>
<name>SPRT_PSEPK</name>
<accession>Q88MD4</accession>
<feature type="chain" id="PRO_0000213274" description="Protein SprT">
    <location>
        <begin position="1"/>
        <end position="164"/>
    </location>
</feature>
<feature type="domain" description="SprT-like">
    <location>
        <begin position="13"/>
        <end position="156"/>
    </location>
</feature>
<feature type="active site" evidence="1">
    <location>
        <position position="70"/>
    </location>
</feature>
<feature type="binding site" evidence="1">
    <location>
        <position position="69"/>
    </location>
    <ligand>
        <name>Zn(2+)</name>
        <dbReference type="ChEBI" id="CHEBI:29105"/>
    </ligand>
</feature>
<feature type="binding site" evidence="1">
    <location>
        <position position="73"/>
    </location>
    <ligand>
        <name>Zn(2+)</name>
        <dbReference type="ChEBI" id="CHEBI:29105"/>
    </ligand>
</feature>
<protein>
    <recommendedName>
        <fullName>Protein SprT</fullName>
    </recommendedName>
</protein>
<evidence type="ECO:0000255" key="1"/>
<evidence type="ECO:0000305" key="2"/>
<comment type="cofactor">
    <cofactor evidence="2">
        <name>Zn(2+)</name>
        <dbReference type="ChEBI" id="CHEBI:29105"/>
    </cofactor>
    <text evidence="2">Binds 1 zinc ion.</text>
</comment>
<comment type="subcellular location">
    <subcellularLocation>
        <location evidence="2">Cytoplasm</location>
    </subcellularLocation>
</comment>
<comment type="similarity">
    <text evidence="2">Belongs to the SprT family.</text>
</comment>
<gene>
    <name type="primary">sprT</name>
    <name type="ordered locus">PP_1639</name>
</gene>
<organism>
    <name type="scientific">Pseudomonas putida (strain ATCC 47054 / DSM 6125 / CFBP 8728 / NCIMB 11950 / KT2440)</name>
    <dbReference type="NCBI Taxonomy" id="160488"/>
    <lineage>
        <taxon>Bacteria</taxon>
        <taxon>Pseudomonadati</taxon>
        <taxon>Pseudomonadota</taxon>
        <taxon>Gammaproteobacteria</taxon>
        <taxon>Pseudomonadales</taxon>
        <taxon>Pseudomonadaceae</taxon>
        <taxon>Pseudomonas</taxon>
    </lineage>
</organism>
<keyword id="KW-0963">Cytoplasm</keyword>
<keyword id="KW-0479">Metal-binding</keyword>
<keyword id="KW-1185">Reference proteome</keyword>
<keyword id="KW-0862">Zinc</keyword>
<dbReference type="EMBL" id="AE015451">
    <property type="protein sequence ID" value="AAN67260.1"/>
    <property type="molecule type" value="Genomic_DNA"/>
</dbReference>
<dbReference type="RefSeq" id="NP_743796.1">
    <property type="nucleotide sequence ID" value="NC_002947.4"/>
</dbReference>
<dbReference type="RefSeq" id="WP_010952701.1">
    <property type="nucleotide sequence ID" value="NZ_CP169744.1"/>
</dbReference>
<dbReference type="STRING" id="160488.PP_1639"/>
<dbReference type="PaxDb" id="160488-PP_1639"/>
<dbReference type="KEGG" id="ppu:PP_1639"/>
<dbReference type="PATRIC" id="fig|160488.4.peg.1731"/>
<dbReference type="eggNOG" id="COG3091">
    <property type="taxonomic scope" value="Bacteria"/>
</dbReference>
<dbReference type="HOGENOM" id="CLU_113336_0_1_6"/>
<dbReference type="OrthoDB" id="267364at2"/>
<dbReference type="PhylomeDB" id="Q88MD4"/>
<dbReference type="BioCyc" id="PPUT160488:G1G01-1737-MONOMER"/>
<dbReference type="Proteomes" id="UP000000556">
    <property type="component" value="Chromosome"/>
</dbReference>
<dbReference type="GO" id="GO:0005737">
    <property type="term" value="C:cytoplasm"/>
    <property type="evidence" value="ECO:0007669"/>
    <property type="project" value="UniProtKB-SubCell"/>
</dbReference>
<dbReference type="GO" id="GO:0008270">
    <property type="term" value="F:zinc ion binding"/>
    <property type="evidence" value="ECO:0007669"/>
    <property type="project" value="UniProtKB-UniRule"/>
</dbReference>
<dbReference type="GO" id="GO:0006950">
    <property type="term" value="P:response to stress"/>
    <property type="evidence" value="ECO:0007669"/>
    <property type="project" value="UniProtKB-ARBA"/>
</dbReference>
<dbReference type="HAMAP" id="MF_00746">
    <property type="entry name" value="SprT"/>
    <property type="match status" value="1"/>
</dbReference>
<dbReference type="InterPro" id="IPR006640">
    <property type="entry name" value="SprT-like_domain"/>
</dbReference>
<dbReference type="InterPro" id="IPR023483">
    <property type="entry name" value="Uncharacterised_SprT"/>
</dbReference>
<dbReference type="NCBIfam" id="NF003421">
    <property type="entry name" value="PRK04860.1"/>
    <property type="match status" value="1"/>
</dbReference>
<dbReference type="PANTHER" id="PTHR38773">
    <property type="entry name" value="PROTEIN SPRT"/>
    <property type="match status" value="1"/>
</dbReference>
<dbReference type="PANTHER" id="PTHR38773:SF1">
    <property type="entry name" value="PROTEIN SPRT"/>
    <property type="match status" value="1"/>
</dbReference>
<dbReference type="Pfam" id="PF10263">
    <property type="entry name" value="SprT-like"/>
    <property type="match status" value="1"/>
</dbReference>
<dbReference type="SMART" id="SM00731">
    <property type="entry name" value="SprT"/>
    <property type="match status" value="1"/>
</dbReference>
<dbReference type="PROSITE" id="PS00142">
    <property type="entry name" value="ZINC_PROTEASE"/>
    <property type="match status" value="1"/>
</dbReference>